<dbReference type="EMBL" id="AY794220">
    <property type="protein sequence ID" value="AAV68327.1"/>
    <property type="molecule type" value="mRNA"/>
</dbReference>
<dbReference type="SMR" id="Q5Q114"/>
<dbReference type="ArachnoServer" id="AS000357">
    <property type="toxin name" value="U1-theraphotoxin-Lp1b"/>
</dbReference>
<dbReference type="ArachnoServer" id="AS000610">
    <property type="toxin name" value="U1-theraphotoxin-Lsp1b"/>
</dbReference>
<dbReference type="GO" id="GO:0005576">
    <property type="term" value="C:extracellular region"/>
    <property type="evidence" value="ECO:0007669"/>
    <property type="project" value="UniProtKB-SubCell"/>
</dbReference>
<dbReference type="GO" id="GO:0090729">
    <property type="term" value="F:toxin activity"/>
    <property type="evidence" value="ECO:0007669"/>
    <property type="project" value="UniProtKB-KW"/>
</dbReference>
<dbReference type="InterPro" id="IPR012625">
    <property type="entry name" value="Hwtx-2-like"/>
</dbReference>
<dbReference type="Pfam" id="PF08089">
    <property type="entry name" value="Toxin_20"/>
    <property type="match status" value="1"/>
</dbReference>
<dbReference type="SUPFAM" id="SSF57059">
    <property type="entry name" value="omega toxin-like"/>
    <property type="match status" value="1"/>
</dbReference>
<dbReference type="PROSITE" id="PS60022">
    <property type="entry name" value="HWTX_2"/>
    <property type="match status" value="1"/>
</dbReference>
<protein>
    <recommendedName>
        <fullName evidence="5">U1-theraphotoxin-Lsp1b</fullName>
        <shortName evidence="5">U1-TRTX-Lsp1b</shortName>
    </recommendedName>
    <alternativeName>
        <fullName evidence="4">LTx2</fullName>
    </alternativeName>
</protein>
<name>TXLT2_LASSB</name>
<sequence length="99" mass="11072">MRSLTLAALLLCSLLLVFHTSAAEELQAQEGHLMIPGDTDTALETVDDERLFECTFECDIKKEGKPCKPKGCKCDDKDNKDHKKCSGGWRCKLKLCLKI</sequence>
<feature type="signal peptide" evidence="3">
    <location>
        <begin position="1"/>
        <end position="23"/>
    </location>
</feature>
<feature type="propeptide" id="PRO_0000287392" evidence="1">
    <location>
        <begin position="24"/>
        <end position="50"/>
    </location>
</feature>
<feature type="chain" id="PRO_0000287393" description="U1-theraphotoxin-Lsp1b">
    <location>
        <begin position="51"/>
        <end position="99"/>
    </location>
</feature>
<feature type="disulfide bond" evidence="1">
    <location>
        <begin position="54"/>
        <end position="67"/>
    </location>
</feature>
<feature type="disulfide bond" evidence="1">
    <location>
        <begin position="58"/>
        <end position="91"/>
    </location>
</feature>
<feature type="disulfide bond" evidence="5">
    <location>
        <begin position="72"/>
        <end position="74"/>
    </location>
</feature>
<feature type="disulfide bond" evidence="1">
    <location>
        <begin position="85"/>
        <end position="96"/>
    </location>
</feature>
<keyword id="KW-1015">Disulfide bond</keyword>
<keyword id="KW-0964">Secreted</keyword>
<keyword id="KW-0732">Signal</keyword>
<keyword id="KW-0800">Toxin</keyword>
<comment type="function">
    <text evidence="2">Toxin that causes irreversible contractile paralysis into adult Aedes aegypti resulting in 100% mortality after 24 hours.</text>
</comment>
<comment type="subcellular location">
    <subcellularLocation>
        <location evidence="6">Secreted</location>
    </subcellularLocation>
</comment>
<comment type="tissue specificity">
    <text evidence="6">Expressed by the venom gland.</text>
</comment>
<comment type="similarity">
    <text evidence="5">Belongs to the neurotoxin 12 (Hwtx-2) family. 04 (lasiotoxin) subfamily.</text>
</comment>
<organism>
    <name type="scientific">Lasiodora sp. (strain IBSP 8539)</name>
    <name type="common">Brazilian salmon pink birdeater</name>
    <name type="synonym">Brazilian salmon pink tarantula</name>
    <dbReference type="NCBI Taxonomy" id="300858"/>
    <lineage>
        <taxon>Eukaryota</taxon>
        <taxon>Metazoa</taxon>
        <taxon>Ecdysozoa</taxon>
        <taxon>Arthropoda</taxon>
        <taxon>Chelicerata</taxon>
        <taxon>Arachnida</taxon>
        <taxon>Araneae</taxon>
        <taxon>Mygalomorphae</taxon>
        <taxon>Theraphosidae</taxon>
        <taxon>Lasiodora</taxon>
    </lineage>
</organism>
<evidence type="ECO:0000250" key="1"/>
<evidence type="ECO:0000250" key="2">
    <source>
        <dbReference type="UniProtKB" id="P0DRD8"/>
    </source>
</evidence>
<evidence type="ECO:0000255" key="3"/>
<evidence type="ECO:0000303" key="4">
    <source>
    </source>
</evidence>
<evidence type="ECO:0000305" key="5"/>
<evidence type="ECO:0000305" key="6">
    <source>
    </source>
</evidence>
<proteinExistence type="inferred from homology"/>
<reference key="1">
    <citation type="journal article" date="2004" name="Toxicon">
        <title>Molecular cloning of toxins expressed by the venom gland of Lasiodora sp.</title>
        <authorList>
            <person name="Vieira A.L.G."/>
            <person name="Moura M.B."/>
            <person name="Baba E.H."/>
            <person name="Chavez-Olortegui C."/>
            <person name="Kalapothakis E."/>
            <person name="Castro I.M."/>
        </authorList>
    </citation>
    <scope>NUCLEOTIDE SEQUENCE [MRNA]</scope>
    <source>
        <tissue>Venom gland</tissue>
    </source>
</reference>
<accession>Q5Q114</accession>